<gene>
    <name type="primary">vimp</name>
    <name type="synonym">sels</name>
    <name type="ORF">zgc:136970</name>
</gene>
<dbReference type="EMBL" id="BC118685">
    <property type="protein sequence ID" value="AAI18686.1"/>
    <property type="status" value="ALT_INIT"/>
    <property type="molecule type" value="mRNA"/>
</dbReference>
<dbReference type="RefSeq" id="NP_001038799.2">
    <property type="nucleotide sequence ID" value="NM_001045334.3"/>
</dbReference>
<dbReference type="FunCoup" id="Q0VFV6">
    <property type="interactions" value="982"/>
</dbReference>
<dbReference type="STRING" id="7955.ENSDARP00000079033"/>
<dbReference type="PaxDb" id="7955-ENSDARP00000079033"/>
<dbReference type="Ensembl" id="ENSDART00000084598">
    <property type="protein sequence ID" value="ENSDARP00000079033"/>
    <property type="gene ID" value="ENSDARG00000070097"/>
</dbReference>
<dbReference type="GeneID" id="735249"/>
<dbReference type="KEGG" id="dre:735249"/>
<dbReference type="AGR" id="ZFIN:ZDB-GENE-060804-1"/>
<dbReference type="CTD" id="55829"/>
<dbReference type="ZFIN" id="ZDB-GENE-060804-1">
    <property type="gene designation" value="selenos"/>
</dbReference>
<dbReference type="eggNOG" id="ENOG502RXYU">
    <property type="taxonomic scope" value="Eukaryota"/>
</dbReference>
<dbReference type="InParanoid" id="Q0VFV6"/>
<dbReference type="OMA" id="KIAMWEN"/>
<dbReference type="OrthoDB" id="75792at2759"/>
<dbReference type="PhylomeDB" id="Q0VFV6"/>
<dbReference type="TreeFam" id="TF329454"/>
<dbReference type="PRO" id="PR:Q0VFV6"/>
<dbReference type="Proteomes" id="UP000000437">
    <property type="component" value="Chromosome 7"/>
</dbReference>
<dbReference type="Bgee" id="ENSDARG00000070097">
    <property type="expression patterns" value="Expressed in swim bladder and 26 other cell types or tissues"/>
</dbReference>
<dbReference type="GO" id="GO:0005881">
    <property type="term" value="C:cytoplasmic microtubule"/>
    <property type="evidence" value="ECO:0000250"/>
    <property type="project" value="UniProtKB"/>
</dbReference>
<dbReference type="GO" id="GO:0036513">
    <property type="term" value="C:Derlin-1 retrotranslocation complex"/>
    <property type="evidence" value="ECO:0000318"/>
    <property type="project" value="GO_Central"/>
</dbReference>
<dbReference type="GO" id="GO:0036502">
    <property type="term" value="C:Derlin-1-VIMP complex"/>
    <property type="evidence" value="ECO:0000318"/>
    <property type="project" value="GO_Central"/>
</dbReference>
<dbReference type="GO" id="GO:0030968">
    <property type="term" value="P:endoplasmic reticulum unfolded protein response"/>
    <property type="evidence" value="ECO:0000318"/>
    <property type="project" value="GO_Central"/>
</dbReference>
<dbReference type="GO" id="GO:0030970">
    <property type="term" value="P:retrograde protein transport, ER to cytosol"/>
    <property type="evidence" value="ECO:0000318"/>
    <property type="project" value="GO_Central"/>
</dbReference>
<dbReference type="Gene3D" id="6.10.250.2950">
    <property type="match status" value="1"/>
</dbReference>
<dbReference type="InterPro" id="IPR009703">
    <property type="entry name" value="Selenoprotein_S"/>
</dbReference>
<dbReference type="PANTHER" id="PTHR28621">
    <property type="entry name" value="SELENOPROTEIN S"/>
    <property type="match status" value="1"/>
</dbReference>
<dbReference type="PANTHER" id="PTHR28621:SF1">
    <property type="entry name" value="SELENOPROTEIN S"/>
    <property type="match status" value="1"/>
</dbReference>
<dbReference type="Pfam" id="PF06936">
    <property type="entry name" value="Selenoprotein_S"/>
    <property type="match status" value="1"/>
</dbReference>
<comment type="function">
    <text evidence="1">Involved in the degradation process of misfolded endoplasmic reticulum (ER) luminal proteins. Participates in the transfer of misfolded proteins from the ER to the cytosol, where they are destroyed by the proteasome in a ubiquitin-dependent manner (By similarity).</text>
</comment>
<comment type="subcellular location">
    <subcellularLocation>
        <location evidence="1">Endoplasmic reticulum membrane</location>
        <topology evidence="1">Single-pass membrane protein</topology>
    </subcellularLocation>
    <subcellularLocation>
        <location evidence="1">Cytoplasm</location>
    </subcellularLocation>
</comment>
<comment type="similarity">
    <text evidence="4">Belongs to the selenoprotein S family.</text>
</comment>
<comment type="sequence caution" evidence="4">
    <conflict type="erroneous initiation">
        <sequence resource="EMBL-CDS" id="AAI18686"/>
    </conflict>
</comment>
<comment type="sequence caution" evidence="4">
    <conflict type="erroneous termination">
        <sequence resource="EMBL-CDS" id="AAI18686"/>
    </conflict>
    <text>Truncated C-terminus.</text>
</comment>
<feature type="chain" id="PRO_0000318651" description="Selenoprotein S">
    <location>
        <begin position="1"/>
        <end position="190"/>
    </location>
</feature>
<feature type="transmembrane region" description="Helical" evidence="2">
    <location>
        <begin position="30"/>
        <end position="50"/>
    </location>
</feature>
<feature type="region of interest" description="Disordered" evidence="3">
    <location>
        <begin position="1"/>
        <end position="20"/>
    </location>
</feature>
<feature type="region of interest" description="Disordered" evidence="3">
    <location>
        <begin position="58"/>
        <end position="190"/>
    </location>
</feature>
<feature type="compositionally biased region" description="Basic and acidic residues" evidence="3">
    <location>
        <begin position="1"/>
        <end position="13"/>
    </location>
</feature>
<feature type="compositionally biased region" description="Low complexity" evidence="3">
    <location>
        <begin position="58"/>
        <end position="68"/>
    </location>
</feature>
<feature type="compositionally biased region" description="Basic and acidic residues" evidence="3">
    <location>
        <begin position="79"/>
        <end position="120"/>
    </location>
</feature>
<feature type="compositionally biased region" description="Polar residues" evidence="3">
    <location>
        <begin position="136"/>
        <end position="151"/>
    </location>
</feature>
<feature type="non-standard amino acid" description="Selenocysteine" evidence="1">
    <location>
        <position position="189"/>
    </location>
</feature>
<sequence length="190" mass="21201">MEAEDGARVRNEDVPPQNQDLSFLQPSVTAFMSEYGWYLLFGCVGVYLLIQHLRKSRSSTQTRSSSGSAEAHDVGSVVRRQEALEASRRRMQEEQDARAAEFREKQRMLEEEKRRQKIEMWDSMQEGKSYKGSAKVAQQNTEEAASSSSLRPKTEKKPLRSSGYSPLSGDAGGSCSWRPGRRGPSAGGUG</sequence>
<evidence type="ECO:0000250" key="1"/>
<evidence type="ECO:0000255" key="2"/>
<evidence type="ECO:0000256" key="3">
    <source>
        <dbReference type="SAM" id="MobiDB-lite"/>
    </source>
</evidence>
<evidence type="ECO:0000305" key="4"/>
<proteinExistence type="evidence at transcript level"/>
<name>SELS_DANRE</name>
<reference key="1">
    <citation type="submission" date="2006-07" db="EMBL/GenBank/DDBJ databases">
        <authorList>
            <consortium name="NIH - Zebrafish Gene Collection (ZGC) project"/>
        </authorList>
    </citation>
    <scope>NUCLEOTIDE SEQUENCE [LARGE SCALE MRNA]</scope>
</reference>
<keyword id="KW-0963">Cytoplasm</keyword>
<keyword id="KW-0256">Endoplasmic reticulum</keyword>
<keyword id="KW-0472">Membrane</keyword>
<keyword id="KW-1185">Reference proteome</keyword>
<keyword id="KW-0712">Selenocysteine</keyword>
<keyword id="KW-0812">Transmembrane</keyword>
<keyword id="KW-1133">Transmembrane helix</keyword>
<protein>
    <recommendedName>
        <fullName>Selenoprotein S</fullName>
        <shortName>SelS</shortName>
    </recommendedName>
    <alternativeName>
        <fullName>VCP-interacting membrane protein</fullName>
    </alternativeName>
</protein>
<organism>
    <name type="scientific">Danio rerio</name>
    <name type="common">Zebrafish</name>
    <name type="synonym">Brachydanio rerio</name>
    <dbReference type="NCBI Taxonomy" id="7955"/>
    <lineage>
        <taxon>Eukaryota</taxon>
        <taxon>Metazoa</taxon>
        <taxon>Chordata</taxon>
        <taxon>Craniata</taxon>
        <taxon>Vertebrata</taxon>
        <taxon>Euteleostomi</taxon>
        <taxon>Actinopterygii</taxon>
        <taxon>Neopterygii</taxon>
        <taxon>Teleostei</taxon>
        <taxon>Ostariophysi</taxon>
        <taxon>Cypriniformes</taxon>
        <taxon>Danionidae</taxon>
        <taxon>Danioninae</taxon>
        <taxon>Danio</taxon>
    </lineage>
</organism>
<accession>Q0VFV6</accession>